<name>YOX1_SCHPO</name>
<dbReference type="EMBL" id="L14773">
    <property type="protein sequence ID" value="AAA53085.1"/>
    <property type="molecule type" value="Genomic_DNA"/>
</dbReference>
<dbReference type="EMBL" id="CU329671">
    <property type="protein sequence ID" value="CAB57917.1"/>
    <property type="molecule type" value="Genomic_DNA"/>
</dbReference>
<dbReference type="PIR" id="S50010">
    <property type="entry name" value="S50010"/>
</dbReference>
<dbReference type="RefSeq" id="NP_595674.1">
    <property type="nucleotide sequence ID" value="NM_001021569.2"/>
</dbReference>
<dbReference type="SMR" id="P40923"/>
<dbReference type="BioGRID" id="276839">
    <property type="interactions" value="83"/>
</dbReference>
<dbReference type="FunCoup" id="P40923">
    <property type="interactions" value="3"/>
</dbReference>
<dbReference type="IntAct" id="P40923">
    <property type="interactions" value="1"/>
</dbReference>
<dbReference type="MINT" id="P40923"/>
<dbReference type="STRING" id="284812.P40923"/>
<dbReference type="iPTMnet" id="P40923"/>
<dbReference type="PaxDb" id="4896-SPBC21B10.13c.1"/>
<dbReference type="EnsemblFungi" id="SPBC21B10.13c.1">
    <property type="protein sequence ID" value="SPBC21B10.13c.1:pep"/>
    <property type="gene ID" value="SPBC21B10.13c"/>
</dbReference>
<dbReference type="PomBase" id="SPBC21B10.13c">
    <property type="gene designation" value="yox1"/>
</dbReference>
<dbReference type="VEuPathDB" id="FungiDB:SPBC21B10.13c"/>
<dbReference type="eggNOG" id="KOG0490">
    <property type="taxonomic scope" value="Eukaryota"/>
</dbReference>
<dbReference type="HOGENOM" id="CLU_1343950_0_0_1"/>
<dbReference type="InParanoid" id="P40923"/>
<dbReference type="OMA" id="LCESQNG"/>
<dbReference type="PRO" id="PR:P40923"/>
<dbReference type="Proteomes" id="UP000002485">
    <property type="component" value="Chromosome II"/>
</dbReference>
<dbReference type="GO" id="GO:0000785">
    <property type="term" value="C:chromatin"/>
    <property type="evidence" value="ECO:0000314"/>
    <property type="project" value="PomBase"/>
</dbReference>
<dbReference type="GO" id="GO:0030907">
    <property type="term" value="C:MBF transcription complex"/>
    <property type="evidence" value="ECO:0000314"/>
    <property type="project" value="PomBase"/>
</dbReference>
<dbReference type="GO" id="GO:0005634">
    <property type="term" value="C:nucleus"/>
    <property type="evidence" value="ECO:0000353"/>
    <property type="project" value="PomBase"/>
</dbReference>
<dbReference type="GO" id="GO:1990841">
    <property type="term" value="F:promoter-specific chromatin binding"/>
    <property type="evidence" value="ECO:0000269"/>
    <property type="project" value="PomBase"/>
</dbReference>
<dbReference type="GO" id="GO:0000978">
    <property type="term" value="F:RNA polymerase II cis-regulatory region sequence-specific DNA binding"/>
    <property type="evidence" value="ECO:0000314"/>
    <property type="project" value="PomBase"/>
</dbReference>
<dbReference type="GO" id="GO:0003713">
    <property type="term" value="F:transcription coactivator activity"/>
    <property type="evidence" value="ECO:0000269"/>
    <property type="project" value="PomBase"/>
</dbReference>
<dbReference type="GO" id="GO:0003714">
    <property type="term" value="F:transcription corepressor activity"/>
    <property type="evidence" value="ECO:0000269"/>
    <property type="project" value="PomBase"/>
</dbReference>
<dbReference type="GO" id="GO:0030154">
    <property type="term" value="P:cell differentiation"/>
    <property type="evidence" value="ECO:0000318"/>
    <property type="project" value="GO_Central"/>
</dbReference>
<dbReference type="GO" id="GO:0000122">
    <property type="term" value="P:negative regulation of transcription by RNA polymerase II"/>
    <property type="evidence" value="ECO:0000315"/>
    <property type="project" value="PomBase"/>
</dbReference>
<dbReference type="GO" id="GO:0006357">
    <property type="term" value="P:regulation of transcription by RNA polymerase II"/>
    <property type="evidence" value="ECO:0000318"/>
    <property type="project" value="GO_Central"/>
</dbReference>
<dbReference type="CDD" id="cd00086">
    <property type="entry name" value="homeodomain"/>
    <property type="match status" value="1"/>
</dbReference>
<dbReference type="Gene3D" id="1.10.10.60">
    <property type="entry name" value="Homeodomain-like"/>
    <property type="match status" value="1"/>
</dbReference>
<dbReference type="InterPro" id="IPR001356">
    <property type="entry name" value="HD"/>
</dbReference>
<dbReference type="InterPro" id="IPR051000">
    <property type="entry name" value="Homeobox_DNA-bind_prot"/>
</dbReference>
<dbReference type="InterPro" id="IPR009057">
    <property type="entry name" value="Homeodomain-like_sf"/>
</dbReference>
<dbReference type="PANTHER" id="PTHR24324:SF5">
    <property type="entry name" value="HEMATOPOIETICALLY-EXPRESSED HOMEOBOX PROTEIN HHEX"/>
    <property type="match status" value="1"/>
</dbReference>
<dbReference type="PANTHER" id="PTHR24324">
    <property type="entry name" value="HOMEOBOX PROTEIN HHEX"/>
    <property type="match status" value="1"/>
</dbReference>
<dbReference type="Pfam" id="PF00046">
    <property type="entry name" value="Homeodomain"/>
    <property type="match status" value="1"/>
</dbReference>
<dbReference type="SMART" id="SM00389">
    <property type="entry name" value="HOX"/>
    <property type="match status" value="1"/>
</dbReference>
<dbReference type="SUPFAM" id="SSF46689">
    <property type="entry name" value="Homeodomain-like"/>
    <property type="match status" value="1"/>
</dbReference>
<dbReference type="PROSITE" id="PS50071">
    <property type="entry name" value="HOMEOBOX_2"/>
    <property type="match status" value="1"/>
</dbReference>
<accession>P40923</accession>
<evidence type="ECO:0000255" key="1">
    <source>
        <dbReference type="PROSITE-ProRule" id="PRU00108"/>
    </source>
</evidence>
<evidence type="ECO:0000256" key="2">
    <source>
        <dbReference type="SAM" id="MobiDB-lite"/>
    </source>
</evidence>
<evidence type="ECO:0000269" key="3">
    <source>
    </source>
</evidence>
<evidence type="ECO:0000269" key="4">
    <source>
    </source>
</evidence>
<evidence type="ECO:0000269" key="5">
    <source>
    </source>
</evidence>
<comment type="function">
    <text evidence="4 5">Negative regulatory component of the MBF transcription factor complex involved in cell-cycle G1/S phase-specific gene expression and more particularly DNA replication checkpoint-dependent gene expression.</text>
</comment>
<comment type="subunit">
    <text evidence="4">Component of the MBF transcription factor complex.</text>
</comment>
<comment type="interaction">
    <interactant intactId="EBI-8530485">
        <id>P40923</id>
    </interactant>
    <interactant intactId="EBI-1009350">
        <id>P01129</id>
        <label>cdc10</label>
    </interactant>
    <organismsDiffer>false</organismsDiffer>
    <experiments>4</experiments>
</comment>
<comment type="subcellular location">
    <subcellularLocation>
        <location evidence="1 3 4">Nucleus</location>
    </subcellularLocation>
</comment>
<comment type="induction">
    <text evidence="4 5">Expression is induced during S phase and depends on the MBF transcription factor complex.</text>
</comment>
<comment type="PTM">
    <text evidence="5">Phosphorylated in response to hydroxyurea. Phosphorylation inhibits the repressor activity and is dependent on rad3. However, the regulation of yox1 by rad3 is probably indirect.</text>
</comment>
<organism>
    <name type="scientific">Schizosaccharomyces pombe (strain 972 / ATCC 24843)</name>
    <name type="common">Fission yeast</name>
    <dbReference type="NCBI Taxonomy" id="284812"/>
    <lineage>
        <taxon>Eukaryota</taxon>
        <taxon>Fungi</taxon>
        <taxon>Dikarya</taxon>
        <taxon>Ascomycota</taxon>
        <taxon>Taphrinomycotina</taxon>
        <taxon>Schizosaccharomycetes</taxon>
        <taxon>Schizosaccharomycetales</taxon>
        <taxon>Schizosaccharomycetaceae</taxon>
        <taxon>Schizosaccharomyces</taxon>
    </lineage>
</organism>
<sequence>MSLSDSPSKSGNTGKDLISNNEAKNHEDEETHQKKRRRRTTDAEATLLEQYFLKTPKPSLIERQELSKKLKSSMTPRELQIWFQNKRQSLRRSNCLSRNRLEGTGENSLLRRKSTLTLCETSTGQAELFFQSWPLHSQSVVGEMIHHEQDDYNKENKQQKVVDTTKDISRGSNGNEDSAAHQELEECARSLVELQQQCNDH</sequence>
<gene>
    <name type="primary">yox1</name>
    <name type="ORF">SPBC21B10.13c</name>
</gene>
<reference key="1">
    <citation type="journal article" date="1994" name="Genetics">
        <title>Transient, meiosis-induced expression of the rec6 and rec12 genes of Schizosaccharomyces pombe.</title>
        <authorList>
            <person name="Lin Y."/>
            <person name="Smith G.R."/>
        </authorList>
    </citation>
    <scope>NUCLEOTIDE SEQUENCE [GENOMIC DNA]</scope>
</reference>
<reference key="2">
    <citation type="journal article" date="2002" name="Nature">
        <title>The genome sequence of Schizosaccharomyces pombe.</title>
        <authorList>
            <person name="Wood V."/>
            <person name="Gwilliam R."/>
            <person name="Rajandream M.A."/>
            <person name="Lyne M.H."/>
            <person name="Lyne R."/>
            <person name="Stewart A."/>
            <person name="Sgouros J.G."/>
            <person name="Peat N."/>
            <person name="Hayles J."/>
            <person name="Baker S.G."/>
            <person name="Basham D."/>
            <person name="Bowman S."/>
            <person name="Brooks K."/>
            <person name="Brown D."/>
            <person name="Brown S."/>
            <person name="Chillingworth T."/>
            <person name="Churcher C.M."/>
            <person name="Collins M."/>
            <person name="Connor R."/>
            <person name="Cronin A."/>
            <person name="Davis P."/>
            <person name="Feltwell T."/>
            <person name="Fraser A."/>
            <person name="Gentles S."/>
            <person name="Goble A."/>
            <person name="Hamlin N."/>
            <person name="Harris D.E."/>
            <person name="Hidalgo J."/>
            <person name="Hodgson G."/>
            <person name="Holroyd S."/>
            <person name="Hornsby T."/>
            <person name="Howarth S."/>
            <person name="Huckle E.J."/>
            <person name="Hunt S."/>
            <person name="Jagels K."/>
            <person name="James K.D."/>
            <person name="Jones L."/>
            <person name="Jones M."/>
            <person name="Leather S."/>
            <person name="McDonald S."/>
            <person name="McLean J."/>
            <person name="Mooney P."/>
            <person name="Moule S."/>
            <person name="Mungall K.L."/>
            <person name="Murphy L.D."/>
            <person name="Niblett D."/>
            <person name="Odell C."/>
            <person name="Oliver K."/>
            <person name="O'Neil S."/>
            <person name="Pearson D."/>
            <person name="Quail M.A."/>
            <person name="Rabbinowitsch E."/>
            <person name="Rutherford K.M."/>
            <person name="Rutter S."/>
            <person name="Saunders D."/>
            <person name="Seeger K."/>
            <person name="Sharp S."/>
            <person name="Skelton J."/>
            <person name="Simmonds M.N."/>
            <person name="Squares R."/>
            <person name="Squares S."/>
            <person name="Stevens K."/>
            <person name="Taylor K."/>
            <person name="Taylor R.G."/>
            <person name="Tivey A."/>
            <person name="Walsh S.V."/>
            <person name="Warren T."/>
            <person name="Whitehead S."/>
            <person name="Woodward J.R."/>
            <person name="Volckaert G."/>
            <person name="Aert R."/>
            <person name="Robben J."/>
            <person name="Grymonprez B."/>
            <person name="Weltjens I."/>
            <person name="Vanstreels E."/>
            <person name="Rieger M."/>
            <person name="Schaefer M."/>
            <person name="Mueller-Auer S."/>
            <person name="Gabel C."/>
            <person name="Fuchs M."/>
            <person name="Duesterhoeft A."/>
            <person name="Fritzc C."/>
            <person name="Holzer E."/>
            <person name="Moestl D."/>
            <person name="Hilbert H."/>
            <person name="Borzym K."/>
            <person name="Langer I."/>
            <person name="Beck A."/>
            <person name="Lehrach H."/>
            <person name="Reinhardt R."/>
            <person name="Pohl T.M."/>
            <person name="Eger P."/>
            <person name="Zimmermann W."/>
            <person name="Wedler H."/>
            <person name="Wambutt R."/>
            <person name="Purnelle B."/>
            <person name="Goffeau A."/>
            <person name="Cadieu E."/>
            <person name="Dreano S."/>
            <person name="Gloux S."/>
            <person name="Lelaure V."/>
            <person name="Mottier S."/>
            <person name="Galibert F."/>
            <person name="Aves S.J."/>
            <person name="Xiang Z."/>
            <person name="Hunt C."/>
            <person name="Moore K."/>
            <person name="Hurst S.M."/>
            <person name="Lucas M."/>
            <person name="Rochet M."/>
            <person name="Gaillardin C."/>
            <person name="Tallada V.A."/>
            <person name="Garzon A."/>
            <person name="Thode G."/>
            <person name="Daga R.R."/>
            <person name="Cruzado L."/>
            <person name="Jimenez J."/>
            <person name="Sanchez M."/>
            <person name="del Rey F."/>
            <person name="Benito J."/>
            <person name="Dominguez A."/>
            <person name="Revuelta J.L."/>
            <person name="Moreno S."/>
            <person name="Armstrong J."/>
            <person name="Forsburg S.L."/>
            <person name="Cerutti L."/>
            <person name="Lowe T."/>
            <person name="McCombie W.R."/>
            <person name="Paulsen I."/>
            <person name="Potashkin J."/>
            <person name="Shpakovski G.V."/>
            <person name="Ussery D."/>
            <person name="Barrell B.G."/>
            <person name="Nurse P."/>
        </authorList>
    </citation>
    <scope>NUCLEOTIDE SEQUENCE [LARGE SCALE GENOMIC DNA]</scope>
    <source>
        <strain>972 / ATCC 24843</strain>
    </source>
</reference>
<reference key="3">
    <citation type="journal article" date="2006" name="Nat. Biotechnol.">
        <title>ORFeome cloning and global analysis of protein localization in the fission yeast Schizosaccharomyces pombe.</title>
        <authorList>
            <person name="Matsuyama A."/>
            <person name="Arai R."/>
            <person name="Yashiroda Y."/>
            <person name="Shirai A."/>
            <person name="Kamata A."/>
            <person name="Sekido S."/>
            <person name="Kobayashi Y."/>
            <person name="Hashimoto A."/>
            <person name="Hamamoto M."/>
            <person name="Hiraoka Y."/>
            <person name="Horinouchi S."/>
            <person name="Yoshida M."/>
        </authorList>
    </citation>
    <scope>SUBCELLULAR LOCATION [LARGE SCALE ANALYSIS]</scope>
</reference>
<reference key="4">
    <citation type="journal article" date="2009" name="PLoS Genet.">
        <title>The fission yeast homeodomain protein Yox1p binds to MBF and confines MBF-dependent cell-cycle transcription to G1-S via negative feedback.</title>
        <authorList>
            <person name="Aligianni S."/>
            <person name="Lackner D.H."/>
            <person name="Klier S."/>
            <person name="Rustici G."/>
            <person name="Wilhelm B.T."/>
            <person name="Marguerat S."/>
            <person name="Codlin S."/>
            <person name="Brazma A."/>
            <person name="de Bruin R.A."/>
            <person name="Bahler J."/>
        </authorList>
    </citation>
    <scope>INDUCTION</scope>
    <scope>IDENTIFICATION IN THE MBF COMPLEX</scope>
    <scope>SUBCELLULAR LOCATION</scope>
    <scope>DNA-BINDING</scope>
    <scope>FUNCTION</scope>
</reference>
<reference key="5">
    <citation type="journal article" date="2011" name="Cell Cycle">
        <title>A homeodomain transcription factor regulates the DNA replication checkpoint in yeast.</title>
        <authorList>
            <person name="Purtill F.S."/>
            <person name="Whitehall S.K."/>
            <person name="Williams E.S."/>
            <person name="McInerny C.J."/>
            <person name="Sharrocks A.D."/>
            <person name="Morgan B.A."/>
        </authorList>
    </citation>
    <scope>FUNCTION</scope>
    <scope>INDUCTION</scope>
    <scope>PHOSPHORYLATION</scope>
</reference>
<feature type="chain" id="PRO_0000049411" description="MBF complex negative regulatory component yox1">
    <location>
        <begin position="1"/>
        <end position="201"/>
    </location>
</feature>
<feature type="DNA-binding region" description="Homeobox" evidence="1">
    <location>
        <begin position="33"/>
        <end position="92"/>
    </location>
</feature>
<feature type="region of interest" description="Disordered" evidence="2">
    <location>
        <begin position="1"/>
        <end position="42"/>
    </location>
</feature>
<feature type="compositionally biased region" description="Polar residues" evidence="2">
    <location>
        <begin position="1"/>
        <end position="22"/>
    </location>
</feature>
<feature type="compositionally biased region" description="Basic and acidic residues" evidence="2">
    <location>
        <begin position="23"/>
        <end position="32"/>
    </location>
</feature>
<protein>
    <recommendedName>
        <fullName>MBF complex negative regulatory component yox1</fullName>
    </recommendedName>
</protein>
<keyword id="KW-0131">Cell cycle</keyword>
<keyword id="KW-0238">DNA-binding</keyword>
<keyword id="KW-0371">Homeobox</keyword>
<keyword id="KW-0539">Nucleus</keyword>
<keyword id="KW-0597">Phosphoprotein</keyword>
<keyword id="KW-1185">Reference proteome</keyword>
<keyword id="KW-0678">Repressor</keyword>
<keyword id="KW-0804">Transcription</keyword>
<keyword id="KW-0805">Transcription regulation</keyword>
<proteinExistence type="evidence at protein level"/>